<comment type="function">
    <text evidence="1">The UvrABC repair system catalyzes the recognition and processing of DNA lesions. UvrC both incises the 5' and 3' sides of the lesion. The N-terminal half is responsible for the 3' incision and the C-terminal half is responsible for the 5' incision.</text>
</comment>
<comment type="subunit">
    <text evidence="1">Interacts with UvrB in an incision complex.</text>
</comment>
<comment type="subcellular location">
    <subcellularLocation>
        <location evidence="1">Cytoplasm</location>
    </subcellularLocation>
</comment>
<comment type="similarity">
    <text evidence="1">Belongs to the UvrC family.</text>
</comment>
<proteinExistence type="inferred from homology"/>
<keyword id="KW-0963">Cytoplasm</keyword>
<keyword id="KW-0227">DNA damage</keyword>
<keyword id="KW-0228">DNA excision</keyword>
<keyword id="KW-0234">DNA repair</keyword>
<keyword id="KW-0267">Excision nuclease</keyword>
<keyword id="KW-1185">Reference proteome</keyword>
<keyword id="KW-0742">SOS response</keyword>
<accession>A0PYB2</accession>
<protein>
    <recommendedName>
        <fullName evidence="1">UvrABC system protein C</fullName>
        <shortName evidence="1">Protein UvrC</shortName>
    </recommendedName>
    <alternativeName>
        <fullName evidence="1">Excinuclease ABC subunit C</fullName>
    </alternativeName>
</protein>
<sequence>MFDFEYQLKIIPEKPGVYLMKNSLGEVIYVGKAKVLKNRVRQYFQNSKNHGSKVRAMVKNIAEFEYIITDSEMEALILECNLIKKYRPRYNILLKDDKHYPFLKITTNEDFPRIFVTRVRAKDGARYLGPYPETSAVYETIELIKKIFPLRTCRLNIKENGEPVKPCLNYHIKLCTAPCAGYISREEYGKTIKKIIDLLNGKDNEVINDLKIKMEKASSELKFEEAASFRDKLLAVEKIRERQKIISSNFENEDFINMYSEEIDLCAQIFFVRDGKIMGREHFILDRSIFGNNADIISNFIKDFYGGTAFIPKTIYVPEVMDIELLENWLSSKKGSKVSIKIPQKGEKKKILDLVESNAKNTLEQFKLKLKVDKELYSNTLKELQNILELEEIPNRIEAYDISNIQGVDSVGSMIVFDKGKPKNSDYRRFKIKTVKGANDYDSMREILTRRFTHGLEEIKEIQKRNLLLSGAKFSVFPDLILMDGGKGQVNIALEVLEKLNINIPVCGMVKDDKHKTRGLVYNNKEINIKSNNKIMQFITRVQDEVHRFAITYHRSLRNRRVLHSVLEDIPNIGEKRRKELLQKFGSVENIKKASYDELLDTNSINQKAAKSIIDYFNNAK</sequence>
<gene>
    <name evidence="1" type="primary">uvrC</name>
    <name type="ordered locus">NT01CX_1281</name>
</gene>
<feature type="chain" id="PRO_1000077773" description="UvrABC system protein C">
    <location>
        <begin position="1"/>
        <end position="621"/>
    </location>
</feature>
<feature type="domain" description="GIY-YIG" evidence="1">
    <location>
        <begin position="13"/>
        <end position="92"/>
    </location>
</feature>
<feature type="domain" description="UVR" evidence="1">
    <location>
        <begin position="204"/>
        <end position="239"/>
    </location>
</feature>
<dbReference type="EMBL" id="CP000382">
    <property type="protein sequence ID" value="ABK61048.1"/>
    <property type="molecule type" value="Genomic_DNA"/>
</dbReference>
<dbReference type="RefSeq" id="WP_011721372.1">
    <property type="nucleotide sequence ID" value="NC_008593.1"/>
</dbReference>
<dbReference type="SMR" id="A0PYB2"/>
<dbReference type="STRING" id="386415.NT01CX_1281"/>
<dbReference type="KEGG" id="cno:NT01CX_1281"/>
<dbReference type="eggNOG" id="COG0322">
    <property type="taxonomic scope" value="Bacteria"/>
</dbReference>
<dbReference type="HOGENOM" id="CLU_014841_3_2_9"/>
<dbReference type="Proteomes" id="UP000008220">
    <property type="component" value="Chromosome"/>
</dbReference>
<dbReference type="GO" id="GO:0005737">
    <property type="term" value="C:cytoplasm"/>
    <property type="evidence" value="ECO:0007669"/>
    <property type="project" value="UniProtKB-SubCell"/>
</dbReference>
<dbReference type="GO" id="GO:0009380">
    <property type="term" value="C:excinuclease repair complex"/>
    <property type="evidence" value="ECO:0007669"/>
    <property type="project" value="InterPro"/>
</dbReference>
<dbReference type="GO" id="GO:0003677">
    <property type="term" value="F:DNA binding"/>
    <property type="evidence" value="ECO:0007669"/>
    <property type="project" value="UniProtKB-UniRule"/>
</dbReference>
<dbReference type="GO" id="GO:0009381">
    <property type="term" value="F:excinuclease ABC activity"/>
    <property type="evidence" value="ECO:0007669"/>
    <property type="project" value="UniProtKB-UniRule"/>
</dbReference>
<dbReference type="GO" id="GO:0006289">
    <property type="term" value="P:nucleotide-excision repair"/>
    <property type="evidence" value="ECO:0007669"/>
    <property type="project" value="UniProtKB-UniRule"/>
</dbReference>
<dbReference type="GO" id="GO:0009432">
    <property type="term" value="P:SOS response"/>
    <property type="evidence" value="ECO:0007669"/>
    <property type="project" value="UniProtKB-UniRule"/>
</dbReference>
<dbReference type="CDD" id="cd10434">
    <property type="entry name" value="GIY-YIG_UvrC_Cho"/>
    <property type="match status" value="1"/>
</dbReference>
<dbReference type="FunFam" id="3.40.1440.10:FF:000001">
    <property type="entry name" value="UvrABC system protein C"/>
    <property type="match status" value="1"/>
</dbReference>
<dbReference type="Gene3D" id="1.10.150.20">
    <property type="entry name" value="5' to 3' exonuclease, C-terminal subdomain"/>
    <property type="match status" value="1"/>
</dbReference>
<dbReference type="Gene3D" id="3.40.1440.10">
    <property type="entry name" value="GIY-YIG endonuclease"/>
    <property type="match status" value="1"/>
</dbReference>
<dbReference type="Gene3D" id="4.10.860.10">
    <property type="entry name" value="UVR domain"/>
    <property type="match status" value="1"/>
</dbReference>
<dbReference type="Gene3D" id="3.30.420.340">
    <property type="entry name" value="UvrC, RNAse H endonuclease domain"/>
    <property type="match status" value="1"/>
</dbReference>
<dbReference type="HAMAP" id="MF_00203">
    <property type="entry name" value="UvrC"/>
    <property type="match status" value="1"/>
</dbReference>
<dbReference type="InterPro" id="IPR041663">
    <property type="entry name" value="DisA/LigA_HHH"/>
</dbReference>
<dbReference type="InterPro" id="IPR000305">
    <property type="entry name" value="GIY-YIG_endonuc"/>
</dbReference>
<dbReference type="InterPro" id="IPR035901">
    <property type="entry name" value="GIY-YIG_endonuc_sf"/>
</dbReference>
<dbReference type="InterPro" id="IPR047296">
    <property type="entry name" value="GIY-YIG_UvrC_Cho"/>
</dbReference>
<dbReference type="InterPro" id="IPR010994">
    <property type="entry name" value="RuvA_2-like"/>
</dbReference>
<dbReference type="InterPro" id="IPR001943">
    <property type="entry name" value="UVR_dom"/>
</dbReference>
<dbReference type="InterPro" id="IPR036876">
    <property type="entry name" value="UVR_dom_sf"/>
</dbReference>
<dbReference type="InterPro" id="IPR050066">
    <property type="entry name" value="UvrABC_protein_C"/>
</dbReference>
<dbReference type="InterPro" id="IPR004791">
    <property type="entry name" value="UvrC"/>
</dbReference>
<dbReference type="InterPro" id="IPR001162">
    <property type="entry name" value="UvrC_RNase_H_dom"/>
</dbReference>
<dbReference type="InterPro" id="IPR038476">
    <property type="entry name" value="UvrC_RNase_H_dom_sf"/>
</dbReference>
<dbReference type="NCBIfam" id="NF001824">
    <property type="entry name" value="PRK00558.1-5"/>
    <property type="match status" value="1"/>
</dbReference>
<dbReference type="NCBIfam" id="TIGR00194">
    <property type="entry name" value="uvrC"/>
    <property type="match status" value="1"/>
</dbReference>
<dbReference type="PANTHER" id="PTHR30562:SF1">
    <property type="entry name" value="UVRABC SYSTEM PROTEIN C"/>
    <property type="match status" value="1"/>
</dbReference>
<dbReference type="PANTHER" id="PTHR30562">
    <property type="entry name" value="UVRC/OXIDOREDUCTASE"/>
    <property type="match status" value="1"/>
</dbReference>
<dbReference type="Pfam" id="PF01541">
    <property type="entry name" value="GIY-YIG"/>
    <property type="match status" value="1"/>
</dbReference>
<dbReference type="Pfam" id="PF12826">
    <property type="entry name" value="HHH_2"/>
    <property type="match status" value="1"/>
</dbReference>
<dbReference type="Pfam" id="PF02151">
    <property type="entry name" value="UVR"/>
    <property type="match status" value="1"/>
</dbReference>
<dbReference type="Pfam" id="PF22920">
    <property type="entry name" value="UvrC_RNaseH"/>
    <property type="match status" value="1"/>
</dbReference>
<dbReference type="Pfam" id="PF08459">
    <property type="entry name" value="UvrC_RNaseH_dom"/>
    <property type="match status" value="1"/>
</dbReference>
<dbReference type="SMART" id="SM00465">
    <property type="entry name" value="GIYc"/>
    <property type="match status" value="1"/>
</dbReference>
<dbReference type="SUPFAM" id="SSF46600">
    <property type="entry name" value="C-terminal UvrC-binding domain of UvrB"/>
    <property type="match status" value="1"/>
</dbReference>
<dbReference type="SUPFAM" id="SSF82771">
    <property type="entry name" value="GIY-YIG endonuclease"/>
    <property type="match status" value="1"/>
</dbReference>
<dbReference type="SUPFAM" id="SSF47781">
    <property type="entry name" value="RuvA domain 2-like"/>
    <property type="match status" value="1"/>
</dbReference>
<dbReference type="PROSITE" id="PS50164">
    <property type="entry name" value="GIY_YIG"/>
    <property type="match status" value="1"/>
</dbReference>
<dbReference type="PROSITE" id="PS50151">
    <property type="entry name" value="UVR"/>
    <property type="match status" value="1"/>
</dbReference>
<dbReference type="PROSITE" id="PS50165">
    <property type="entry name" value="UVRC"/>
    <property type="match status" value="1"/>
</dbReference>
<organism>
    <name type="scientific">Clostridium novyi (strain NT)</name>
    <dbReference type="NCBI Taxonomy" id="386415"/>
    <lineage>
        <taxon>Bacteria</taxon>
        <taxon>Bacillati</taxon>
        <taxon>Bacillota</taxon>
        <taxon>Clostridia</taxon>
        <taxon>Eubacteriales</taxon>
        <taxon>Clostridiaceae</taxon>
        <taxon>Clostridium</taxon>
    </lineage>
</organism>
<name>UVRC_CLONN</name>
<evidence type="ECO:0000255" key="1">
    <source>
        <dbReference type="HAMAP-Rule" id="MF_00203"/>
    </source>
</evidence>
<reference key="1">
    <citation type="journal article" date="2006" name="Nat. Biotechnol.">
        <title>The genome and transcriptomes of the anti-tumor agent Clostridium novyi-NT.</title>
        <authorList>
            <person name="Bettegowda C."/>
            <person name="Huang X."/>
            <person name="Lin J."/>
            <person name="Cheong I."/>
            <person name="Kohli M."/>
            <person name="Szabo S.A."/>
            <person name="Zhang X."/>
            <person name="Diaz L.A. Jr."/>
            <person name="Velculescu V.E."/>
            <person name="Parmigiani G."/>
            <person name="Kinzler K.W."/>
            <person name="Vogelstein B."/>
            <person name="Zhou S."/>
        </authorList>
    </citation>
    <scope>NUCLEOTIDE SEQUENCE [LARGE SCALE GENOMIC DNA]</scope>
    <source>
        <strain>NT</strain>
    </source>
</reference>